<reference key="1">
    <citation type="submission" date="1999-10" db="EMBL/GenBank/DDBJ databases">
        <title>Characterization of the cpn10-cpn60 chaperonine from Thermus thermophilus HB27.</title>
        <authorList>
            <person name="Boskocik J."/>
            <person name="Moreno R."/>
            <person name="Valpuesta J.M."/>
            <person name="Berenguer J."/>
        </authorList>
    </citation>
    <scope>NUCLEOTIDE SEQUENCE [GENOMIC DNA]</scope>
</reference>
<reference key="2">
    <citation type="journal article" date="2004" name="Nat. Biotechnol.">
        <title>The genome sequence of the extreme thermophile Thermus thermophilus.</title>
        <authorList>
            <person name="Henne A."/>
            <person name="Brueggemann H."/>
            <person name="Raasch C."/>
            <person name="Wiezer A."/>
            <person name="Hartsch T."/>
            <person name="Liesegang H."/>
            <person name="Johann A."/>
            <person name="Lienard T."/>
            <person name="Gohl O."/>
            <person name="Martinez-Arias R."/>
            <person name="Jacobi C."/>
            <person name="Starkuviene V."/>
            <person name="Schlenczeck S."/>
            <person name="Dencker S."/>
            <person name="Huber R."/>
            <person name="Klenk H.-P."/>
            <person name="Kramer W."/>
            <person name="Merkl R."/>
            <person name="Gottschalk G."/>
            <person name="Fritz H.-J."/>
        </authorList>
    </citation>
    <scope>NUCLEOTIDE SEQUENCE [LARGE SCALE GENOMIC DNA]</scope>
    <source>
        <strain>ATCC BAA-163 / DSM 7039 / HB27</strain>
    </source>
</reference>
<protein>
    <recommendedName>
        <fullName evidence="2">Co-chaperonin GroES</fullName>
    </recommendedName>
    <alternativeName>
        <fullName evidence="2">10 kDa chaperonin</fullName>
    </alternativeName>
    <alternativeName>
        <fullName evidence="2">Chaperonin-10</fullName>
        <shortName evidence="2">Cpn10</shortName>
    </alternativeName>
</protein>
<evidence type="ECO:0000250" key="1"/>
<evidence type="ECO:0000255" key="2">
    <source>
        <dbReference type="HAMAP-Rule" id="MF_00580"/>
    </source>
</evidence>
<evidence type="ECO:0000305" key="3"/>
<evidence type="ECO:0007829" key="4">
    <source>
        <dbReference type="PDB" id="4V4O"/>
    </source>
</evidence>
<organism>
    <name type="scientific">Thermus thermophilus (strain ATCC BAA-163 / DSM 7039 / HB27)</name>
    <dbReference type="NCBI Taxonomy" id="262724"/>
    <lineage>
        <taxon>Bacteria</taxon>
        <taxon>Thermotogati</taxon>
        <taxon>Deinococcota</taxon>
        <taxon>Deinococci</taxon>
        <taxon>Thermales</taxon>
        <taxon>Thermaceae</taxon>
        <taxon>Thermus</taxon>
    </lineage>
</organism>
<gene>
    <name evidence="2" type="primary">groES</name>
    <name type="synonym">chpS</name>
    <name evidence="2" type="synonym">groS</name>
    <name type="synonym">hsp10</name>
    <name type="ordered locus">TT_C1713</name>
</gene>
<accession>P61492</accession>
<accession>P45747</accession>
<accession>Q60017</accession>
<sequence length="101" mass="10996">MAAEVKTVIKPLGDRVVVKRIEEEPKTKGGIVLPDTAKEKPQKGKVIAVGTGRVLENGQRVPLEVKEGDIVVFAKYGGTEIEIDGEEYVILSERDLLAVLQ</sequence>
<name>CH10_THET2</name>
<proteinExistence type="evidence at protein level"/>
<keyword id="KW-0002">3D-structure</keyword>
<keyword id="KW-0143">Chaperone</keyword>
<keyword id="KW-0963">Cytoplasm</keyword>
<feature type="initiator methionine" description="Removed" evidence="1">
    <location>
        <position position="1"/>
    </location>
</feature>
<feature type="chain" id="PRO_0000174885" description="Co-chaperonin GroES">
    <location>
        <begin position="2"/>
        <end position="101"/>
    </location>
</feature>
<feature type="strand" evidence="4">
    <location>
        <begin position="9"/>
        <end position="11"/>
    </location>
</feature>
<feature type="strand" evidence="4">
    <location>
        <begin position="16"/>
        <end position="20"/>
    </location>
</feature>
<feature type="turn" evidence="4">
    <location>
        <begin position="35"/>
        <end position="37"/>
    </location>
</feature>
<feature type="strand" evidence="4">
    <location>
        <begin position="42"/>
        <end position="47"/>
    </location>
</feature>
<feature type="strand" evidence="4">
    <location>
        <begin position="70"/>
        <end position="73"/>
    </location>
</feature>
<feature type="strand" evidence="4">
    <location>
        <begin position="78"/>
        <end position="82"/>
    </location>
</feature>
<feature type="strand" evidence="4">
    <location>
        <begin position="87"/>
        <end position="91"/>
    </location>
</feature>
<feature type="turn" evidence="4">
    <location>
        <begin position="93"/>
        <end position="95"/>
    </location>
</feature>
<feature type="strand" evidence="4">
    <location>
        <begin position="96"/>
        <end position="100"/>
    </location>
</feature>
<dbReference type="EMBL" id="AJ250409">
    <property type="protein sequence ID" value="CAB65481.1"/>
    <property type="molecule type" value="Genomic_DNA"/>
</dbReference>
<dbReference type="EMBL" id="AE017221">
    <property type="protein sequence ID" value="AAS82055.1"/>
    <property type="molecule type" value="Genomic_DNA"/>
</dbReference>
<dbReference type="RefSeq" id="WP_011174076.1">
    <property type="nucleotide sequence ID" value="NC_005835.1"/>
</dbReference>
<dbReference type="PDB" id="4V4O">
    <property type="method" value="X-ray"/>
    <property type="resolution" value="2.80 A"/>
    <property type="chains" value="O/P/Q/R/S/T/U/o/p/q/r/s/t/u=2-101"/>
</dbReference>
<dbReference type="PDBsum" id="4V4O"/>
<dbReference type="SMR" id="P61492"/>
<dbReference type="GeneID" id="3168828"/>
<dbReference type="KEGG" id="tth:TT_C1713"/>
<dbReference type="eggNOG" id="COG0234">
    <property type="taxonomic scope" value="Bacteria"/>
</dbReference>
<dbReference type="HOGENOM" id="CLU_132825_2_0_0"/>
<dbReference type="OrthoDB" id="9806791at2"/>
<dbReference type="Proteomes" id="UP000000592">
    <property type="component" value="Chromosome"/>
</dbReference>
<dbReference type="GO" id="GO:0005737">
    <property type="term" value="C:cytoplasm"/>
    <property type="evidence" value="ECO:0007669"/>
    <property type="project" value="UniProtKB-SubCell"/>
</dbReference>
<dbReference type="GO" id="GO:0005524">
    <property type="term" value="F:ATP binding"/>
    <property type="evidence" value="ECO:0007669"/>
    <property type="project" value="InterPro"/>
</dbReference>
<dbReference type="GO" id="GO:0046872">
    <property type="term" value="F:metal ion binding"/>
    <property type="evidence" value="ECO:0007669"/>
    <property type="project" value="TreeGrafter"/>
</dbReference>
<dbReference type="GO" id="GO:0044183">
    <property type="term" value="F:protein folding chaperone"/>
    <property type="evidence" value="ECO:0007669"/>
    <property type="project" value="InterPro"/>
</dbReference>
<dbReference type="GO" id="GO:0051087">
    <property type="term" value="F:protein-folding chaperone binding"/>
    <property type="evidence" value="ECO:0007669"/>
    <property type="project" value="TreeGrafter"/>
</dbReference>
<dbReference type="GO" id="GO:0051082">
    <property type="term" value="F:unfolded protein binding"/>
    <property type="evidence" value="ECO:0007669"/>
    <property type="project" value="TreeGrafter"/>
</dbReference>
<dbReference type="GO" id="GO:0051085">
    <property type="term" value="P:chaperone cofactor-dependent protein refolding"/>
    <property type="evidence" value="ECO:0007669"/>
    <property type="project" value="TreeGrafter"/>
</dbReference>
<dbReference type="CDD" id="cd00320">
    <property type="entry name" value="cpn10"/>
    <property type="match status" value="1"/>
</dbReference>
<dbReference type="FunFam" id="2.30.33.40:FF:000001">
    <property type="entry name" value="10 kDa chaperonin"/>
    <property type="match status" value="1"/>
</dbReference>
<dbReference type="Gene3D" id="2.30.33.40">
    <property type="entry name" value="GroES chaperonin"/>
    <property type="match status" value="1"/>
</dbReference>
<dbReference type="HAMAP" id="MF_00580">
    <property type="entry name" value="CH10"/>
    <property type="match status" value="1"/>
</dbReference>
<dbReference type="InterPro" id="IPR020818">
    <property type="entry name" value="Chaperonin_GroES"/>
</dbReference>
<dbReference type="InterPro" id="IPR037124">
    <property type="entry name" value="Chaperonin_GroES_sf"/>
</dbReference>
<dbReference type="InterPro" id="IPR018369">
    <property type="entry name" value="Chaprnonin_Cpn10_CS"/>
</dbReference>
<dbReference type="InterPro" id="IPR011032">
    <property type="entry name" value="GroES-like_sf"/>
</dbReference>
<dbReference type="NCBIfam" id="NF001527">
    <property type="entry name" value="PRK00364.1-2"/>
    <property type="match status" value="1"/>
</dbReference>
<dbReference type="NCBIfam" id="NF001530">
    <property type="entry name" value="PRK00364.1-6"/>
    <property type="match status" value="1"/>
</dbReference>
<dbReference type="NCBIfam" id="NF001531">
    <property type="entry name" value="PRK00364.2-2"/>
    <property type="match status" value="1"/>
</dbReference>
<dbReference type="NCBIfam" id="NF001533">
    <property type="entry name" value="PRK00364.2-4"/>
    <property type="match status" value="1"/>
</dbReference>
<dbReference type="NCBIfam" id="NF001534">
    <property type="entry name" value="PRK00364.2-5"/>
    <property type="match status" value="1"/>
</dbReference>
<dbReference type="PANTHER" id="PTHR10772">
    <property type="entry name" value="10 KDA HEAT SHOCK PROTEIN"/>
    <property type="match status" value="1"/>
</dbReference>
<dbReference type="PANTHER" id="PTHR10772:SF58">
    <property type="entry name" value="CO-CHAPERONIN GROES"/>
    <property type="match status" value="1"/>
</dbReference>
<dbReference type="Pfam" id="PF00166">
    <property type="entry name" value="Cpn10"/>
    <property type="match status" value="1"/>
</dbReference>
<dbReference type="PRINTS" id="PR00297">
    <property type="entry name" value="CHAPERONIN10"/>
</dbReference>
<dbReference type="SMART" id="SM00883">
    <property type="entry name" value="Cpn10"/>
    <property type="match status" value="1"/>
</dbReference>
<dbReference type="SUPFAM" id="SSF50129">
    <property type="entry name" value="GroES-like"/>
    <property type="match status" value="1"/>
</dbReference>
<dbReference type="PROSITE" id="PS00681">
    <property type="entry name" value="CHAPERONINS_CPN10"/>
    <property type="match status" value="1"/>
</dbReference>
<comment type="function">
    <text evidence="2">Together with the chaperonin GroEL, plays an essential role in assisting protein folding. The GroEL-GroES system forms a nano-cage that allows encapsulation of the non-native substrate proteins and provides a physical environment optimized to promote and accelerate protein folding. GroES binds to the apical surface of the GroEL ring, thereby capping the opening of the GroEL channel.</text>
</comment>
<comment type="subunit">
    <text evidence="2">Heptamer of 7 subunits arranged in a ring. Interacts with the chaperonin GroEL.</text>
</comment>
<comment type="subcellular location">
    <subcellularLocation>
        <location evidence="2">Cytoplasm</location>
    </subcellularLocation>
</comment>
<comment type="similarity">
    <text evidence="2 3">Belongs to the GroES chaperonin family.</text>
</comment>